<keyword id="KW-0030">Aminoacyl-tRNA synthetase</keyword>
<keyword id="KW-0067">ATP-binding</keyword>
<keyword id="KW-0963">Cytoplasm</keyword>
<keyword id="KW-0436">Ligase</keyword>
<keyword id="KW-0547">Nucleotide-binding</keyword>
<keyword id="KW-0648">Protein biosynthesis</keyword>
<reference key="1">
    <citation type="journal article" date="2006" name="Genome Biol.">
        <title>Genomic analysis reveals that Pseudomonas aeruginosa virulence is combinatorial.</title>
        <authorList>
            <person name="Lee D.G."/>
            <person name="Urbach J.M."/>
            <person name="Wu G."/>
            <person name="Liberati N.T."/>
            <person name="Feinbaum R.L."/>
            <person name="Miyata S."/>
            <person name="Diggins L.T."/>
            <person name="He J."/>
            <person name="Saucier M."/>
            <person name="Deziel E."/>
            <person name="Friedman L."/>
            <person name="Li L."/>
            <person name="Grills G."/>
            <person name="Montgomery K."/>
            <person name="Kucherlapati R."/>
            <person name="Rahme L.G."/>
            <person name="Ausubel F.M."/>
        </authorList>
    </citation>
    <scope>NUCLEOTIDE SEQUENCE [LARGE SCALE GENOMIC DNA]</scope>
    <source>
        <strain>UCBPP-PA14</strain>
    </source>
</reference>
<sequence>MKDTIRQLIQQALDQLTADGTLPAGLTPDIQVENTKDRSHGDFASNIAMMLAKPAGMKPRDLAARLVEAIPAHEQLAKVEIAGPGFLNFFQDHVWLAASLDRALADERLGVRKAGPAQRVVIDLSSPNLAKEMHVGHLRSTIIGDAVARVLEFLGDTVIRQNHVGDWGTQFGMLLAYLEEQPVDAEAELHDLEVFYRAAKKRFDESPEFADRARELVVKLQAGDPDCLRLWTRFNEISLSHCQKVYDRLGVKLSMADVMGESAYNDDLAQVVADLTAKGLLTEDNGALCVFLEEFRNAEGNPLPVIVQKAGGGYLYATTDLAAMRYRHNVLHADRVLYFVDQRQALHFQQVFEVARRAGFVPAGMELEHMGFGTMNGADGRPFKTRDGGTVKLIDLLEEAESRAYALVKERNEQRAERGEEPFDEVQLREIGRVVGIDSVKYADLSKHRTSDYSFNFELMLSFEGNTAPYLLYACTRVASVFRKLGQGREQLGGKIVLEQPQELALAAQLAQFGDLINNVALKGVPHLLCAYLYELAGLFSSFYEHCPILTAEDPAQKDSRLRLAALTGRTLEQGLELLGLKTLERM</sequence>
<name>SYR_PSEAB</name>
<accession>Q02EW6</accession>
<gene>
    <name evidence="1" type="primary">argS</name>
    <name type="ordered locus">PA14_66750</name>
</gene>
<comment type="catalytic activity">
    <reaction evidence="1">
        <text>tRNA(Arg) + L-arginine + ATP = L-arginyl-tRNA(Arg) + AMP + diphosphate</text>
        <dbReference type="Rhea" id="RHEA:20301"/>
        <dbReference type="Rhea" id="RHEA-COMP:9658"/>
        <dbReference type="Rhea" id="RHEA-COMP:9673"/>
        <dbReference type="ChEBI" id="CHEBI:30616"/>
        <dbReference type="ChEBI" id="CHEBI:32682"/>
        <dbReference type="ChEBI" id="CHEBI:33019"/>
        <dbReference type="ChEBI" id="CHEBI:78442"/>
        <dbReference type="ChEBI" id="CHEBI:78513"/>
        <dbReference type="ChEBI" id="CHEBI:456215"/>
        <dbReference type="EC" id="6.1.1.19"/>
    </reaction>
</comment>
<comment type="subunit">
    <text evidence="1">Monomer.</text>
</comment>
<comment type="subcellular location">
    <subcellularLocation>
        <location evidence="1">Cytoplasm</location>
    </subcellularLocation>
</comment>
<comment type="similarity">
    <text evidence="1">Belongs to the class-I aminoacyl-tRNA synthetase family.</text>
</comment>
<feature type="chain" id="PRO_1000018091" description="Arginine--tRNA ligase">
    <location>
        <begin position="1"/>
        <end position="587"/>
    </location>
</feature>
<feature type="short sequence motif" description="'HIGH' region">
    <location>
        <begin position="127"/>
        <end position="137"/>
    </location>
</feature>
<protein>
    <recommendedName>
        <fullName evidence="1">Arginine--tRNA ligase</fullName>
        <ecNumber evidence="1">6.1.1.19</ecNumber>
    </recommendedName>
    <alternativeName>
        <fullName evidence="1">Arginyl-tRNA synthetase</fullName>
        <shortName evidence="1">ArgRS</shortName>
    </alternativeName>
</protein>
<dbReference type="EC" id="6.1.1.19" evidence="1"/>
<dbReference type="EMBL" id="CP000438">
    <property type="protein sequence ID" value="ABJ14435.1"/>
    <property type="molecule type" value="Genomic_DNA"/>
</dbReference>
<dbReference type="RefSeq" id="WP_003135774.1">
    <property type="nucleotide sequence ID" value="NZ_CP034244.1"/>
</dbReference>
<dbReference type="SMR" id="Q02EW6"/>
<dbReference type="KEGG" id="pau:PA14_66750"/>
<dbReference type="PseudoCAP" id="PA14_66750"/>
<dbReference type="HOGENOM" id="CLU_006406_5_1_6"/>
<dbReference type="BioCyc" id="PAER208963:G1G74-5631-MONOMER"/>
<dbReference type="Proteomes" id="UP000000653">
    <property type="component" value="Chromosome"/>
</dbReference>
<dbReference type="GO" id="GO:0005737">
    <property type="term" value="C:cytoplasm"/>
    <property type="evidence" value="ECO:0007669"/>
    <property type="project" value="UniProtKB-SubCell"/>
</dbReference>
<dbReference type="GO" id="GO:0004814">
    <property type="term" value="F:arginine-tRNA ligase activity"/>
    <property type="evidence" value="ECO:0007669"/>
    <property type="project" value="UniProtKB-UniRule"/>
</dbReference>
<dbReference type="GO" id="GO:0005524">
    <property type="term" value="F:ATP binding"/>
    <property type="evidence" value="ECO:0007669"/>
    <property type="project" value="UniProtKB-UniRule"/>
</dbReference>
<dbReference type="GO" id="GO:0006420">
    <property type="term" value="P:arginyl-tRNA aminoacylation"/>
    <property type="evidence" value="ECO:0007669"/>
    <property type="project" value="UniProtKB-UniRule"/>
</dbReference>
<dbReference type="CDD" id="cd00671">
    <property type="entry name" value="ArgRS_core"/>
    <property type="match status" value="1"/>
</dbReference>
<dbReference type="FunFam" id="1.10.730.10:FF:000001">
    <property type="entry name" value="Arginine--tRNA ligase"/>
    <property type="match status" value="1"/>
</dbReference>
<dbReference type="FunFam" id="3.30.1360.70:FF:000003">
    <property type="entry name" value="Arginine--tRNA ligase"/>
    <property type="match status" value="1"/>
</dbReference>
<dbReference type="FunFam" id="3.40.50.620:FF:000030">
    <property type="entry name" value="Arginine--tRNA ligase"/>
    <property type="match status" value="1"/>
</dbReference>
<dbReference type="Gene3D" id="3.30.1360.70">
    <property type="entry name" value="Arginyl tRNA synthetase N-terminal domain"/>
    <property type="match status" value="1"/>
</dbReference>
<dbReference type="Gene3D" id="3.40.50.620">
    <property type="entry name" value="HUPs"/>
    <property type="match status" value="1"/>
</dbReference>
<dbReference type="Gene3D" id="1.10.730.10">
    <property type="entry name" value="Isoleucyl-tRNA Synthetase, Domain 1"/>
    <property type="match status" value="1"/>
</dbReference>
<dbReference type="HAMAP" id="MF_00123">
    <property type="entry name" value="Arg_tRNA_synth"/>
    <property type="match status" value="1"/>
</dbReference>
<dbReference type="InterPro" id="IPR001412">
    <property type="entry name" value="aa-tRNA-synth_I_CS"/>
</dbReference>
<dbReference type="InterPro" id="IPR001278">
    <property type="entry name" value="Arg-tRNA-ligase"/>
</dbReference>
<dbReference type="InterPro" id="IPR005148">
    <property type="entry name" value="Arg-tRNA-synth_N"/>
</dbReference>
<dbReference type="InterPro" id="IPR036695">
    <property type="entry name" value="Arg-tRNA-synth_N_sf"/>
</dbReference>
<dbReference type="InterPro" id="IPR035684">
    <property type="entry name" value="ArgRS_core"/>
</dbReference>
<dbReference type="InterPro" id="IPR008909">
    <property type="entry name" value="DALR_anticod-bd"/>
</dbReference>
<dbReference type="InterPro" id="IPR014729">
    <property type="entry name" value="Rossmann-like_a/b/a_fold"/>
</dbReference>
<dbReference type="InterPro" id="IPR009080">
    <property type="entry name" value="tRNAsynth_Ia_anticodon-bd"/>
</dbReference>
<dbReference type="NCBIfam" id="TIGR00456">
    <property type="entry name" value="argS"/>
    <property type="match status" value="1"/>
</dbReference>
<dbReference type="PANTHER" id="PTHR11956:SF5">
    <property type="entry name" value="ARGININE--TRNA LIGASE, CYTOPLASMIC"/>
    <property type="match status" value="1"/>
</dbReference>
<dbReference type="PANTHER" id="PTHR11956">
    <property type="entry name" value="ARGINYL-TRNA SYNTHETASE"/>
    <property type="match status" value="1"/>
</dbReference>
<dbReference type="Pfam" id="PF03485">
    <property type="entry name" value="Arg_tRNA_synt_N"/>
    <property type="match status" value="1"/>
</dbReference>
<dbReference type="Pfam" id="PF05746">
    <property type="entry name" value="DALR_1"/>
    <property type="match status" value="1"/>
</dbReference>
<dbReference type="Pfam" id="PF00750">
    <property type="entry name" value="tRNA-synt_1d"/>
    <property type="match status" value="1"/>
</dbReference>
<dbReference type="PRINTS" id="PR01038">
    <property type="entry name" value="TRNASYNTHARG"/>
</dbReference>
<dbReference type="SMART" id="SM01016">
    <property type="entry name" value="Arg_tRNA_synt_N"/>
    <property type="match status" value="1"/>
</dbReference>
<dbReference type="SMART" id="SM00836">
    <property type="entry name" value="DALR_1"/>
    <property type="match status" value="1"/>
</dbReference>
<dbReference type="SUPFAM" id="SSF47323">
    <property type="entry name" value="Anticodon-binding domain of a subclass of class I aminoacyl-tRNA synthetases"/>
    <property type="match status" value="1"/>
</dbReference>
<dbReference type="SUPFAM" id="SSF55190">
    <property type="entry name" value="Arginyl-tRNA synthetase (ArgRS), N-terminal 'additional' domain"/>
    <property type="match status" value="1"/>
</dbReference>
<dbReference type="SUPFAM" id="SSF52374">
    <property type="entry name" value="Nucleotidylyl transferase"/>
    <property type="match status" value="1"/>
</dbReference>
<dbReference type="PROSITE" id="PS00178">
    <property type="entry name" value="AA_TRNA_LIGASE_I"/>
    <property type="match status" value="1"/>
</dbReference>
<organism>
    <name type="scientific">Pseudomonas aeruginosa (strain UCBPP-PA14)</name>
    <dbReference type="NCBI Taxonomy" id="208963"/>
    <lineage>
        <taxon>Bacteria</taxon>
        <taxon>Pseudomonadati</taxon>
        <taxon>Pseudomonadota</taxon>
        <taxon>Gammaproteobacteria</taxon>
        <taxon>Pseudomonadales</taxon>
        <taxon>Pseudomonadaceae</taxon>
        <taxon>Pseudomonas</taxon>
    </lineage>
</organism>
<proteinExistence type="inferred from homology"/>
<evidence type="ECO:0000255" key="1">
    <source>
        <dbReference type="HAMAP-Rule" id="MF_00123"/>
    </source>
</evidence>